<geneLocation type="mitochondrion"/>
<proteinExistence type="inferred from homology"/>
<name>CYB_MICSC</name>
<organism>
    <name type="scientific">Micronycteris schmidtorum</name>
    <name type="common">Schmidts's big-eared bat</name>
    <dbReference type="NCBI Taxonomy" id="148069"/>
    <lineage>
        <taxon>Eukaryota</taxon>
        <taxon>Metazoa</taxon>
        <taxon>Chordata</taxon>
        <taxon>Craniata</taxon>
        <taxon>Vertebrata</taxon>
        <taxon>Euteleostomi</taxon>
        <taxon>Mammalia</taxon>
        <taxon>Eutheria</taxon>
        <taxon>Laurasiatheria</taxon>
        <taxon>Chiroptera</taxon>
        <taxon>Yangochiroptera</taxon>
        <taxon>Phyllostomidae</taxon>
        <taxon>Phyllostominae</taxon>
        <taxon>Micronycteris</taxon>
    </lineage>
</organism>
<evidence type="ECO:0000250" key="1"/>
<evidence type="ECO:0000250" key="2">
    <source>
        <dbReference type="UniProtKB" id="P00157"/>
    </source>
</evidence>
<evidence type="ECO:0000255" key="3">
    <source>
        <dbReference type="PROSITE-ProRule" id="PRU00967"/>
    </source>
</evidence>
<evidence type="ECO:0000255" key="4">
    <source>
        <dbReference type="PROSITE-ProRule" id="PRU00968"/>
    </source>
</evidence>
<comment type="function">
    <text evidence="2">Component of the ubiquinol-cytochrome c reductase complex (complex III or cytochrome b-c1 complex) that is part of the mitochondrial respiratory chain. The b-c1 complex mediates electron transfer from ubiquinol to cytochrome c. Contributes to the generation of a proton gradient across the mitochondrial membrane that is then used for ATP synthesis.</text>
</comment>
<comment type="cofactor">
    <cofactor evidence="2">
        <name>heme b</name>
        <dbReference type="ChEBI" id="CHEBI:60344"/>
    </cofactor>
    <text evidence="2">Binds 2 heme b groups non-covalently.</text>
</comment>
<comment type="subunit">
    <text evidence="2">The cytochrome bc1 complex contains 11 subunits: 3 respiratory subunits (MT-CYB, CYC1 and UQCRFS1), 2 core proteins (UQCRC1 and UQCRC2) and 6 low-molecular weight proteins (UQCRH/QCR6, UQCRB/QCR7, UQCRQ/QCR8, UQCR10/QCR9, UQCR11/QCR10 and a cleavage product of UQCRFS1). This cytochrome bc1 complex then forms a dimer.</text>
</comment>
<comment type="subcellular location">
    <subcellularLocation>
        <location evidence="2">Mitochondrion inner membrane</location>
        <topology evidence="2">Multi-pass membrane protein</topology>
    </subcellularLocation>
</comment>
<comment type="miscellaneous">
    <text evidence="1">Heme 1 (or BL or b562) is low-potential and absorbs at about 562 nm, and heme 2 (or BH or b566) is high-potential and absorbs at about 566 nm.</text>
</comment>
<comment type="similarity">
    <text evidence="3 4">Belongs to the cytochrome b family.</text>
</comment>
<comment type="caution">
    <text evidence="2">The full-length protein contains only eight transmembrane helices, not nine as predicted by bioinformatics tools.</text>
</comment>
<sequence>MTNIRKTHPLLKILNSSLVDLPAPSSLTSWWNFGSLLGICLAVQILTGLFLAMHYTSDTATAFNSVTHICRDVNYGWILRYLHANGASMFFICLYLHVGRSLYYGSYTYTETWNIGIILLFAVMATAFMGYVLPWGQMSFWGATVITNLLSAIPYIGTDLVQWIWGGFSVDKATLTRFFAFHFLLPFIISALVMVHLLFLHETGSNNPTGIPSDLDMIPFHPYYTIKDILGLLIMLTALSTLVLFSPDLLGDPDNYTPANPLNTPPHIKPEWYFLFAYAILRSIPNKLGGVLALVLSILVLAIVPMLHTSKQQSMMFRPLSQCLFWLLVADLLMLTWIGGQPVEHPYVIIGQVASILYFSIILVFMPLTGIMENHLLKW</sequence>
<protein>
    <recommendedName>
        <fullName>Cytochrome b</fullName>
    </recommendedName>
    <alternativeName>
        <fullName>Complex III subunit 3</fullName>
    </alternativeName>
    <alternativeName>
        <fullName>Complex III subunit III</fullName>
    </alternativeName>
    <alternativeName>
        <fullName>Cytochrome b-c1 complex subunit 3</fullName>
    </alternativeName>
    <alternativeName>
        <fullName>Ubiquinol-cytochrome-c reductase complex cytochrome b subunit</fullName>
    </alternativeName>
</protein>
<keyword id="KW-0249">Electron transport</keyword>
<keyword id="KW-0349">Heme</keyword>
<keyword id="KW-0408">Iron</keyword>
<keyword id="KW-0472">Membrane</keyword>
<keyword id="KW-0479">Metal-binding</keyword>
<keyword id="KW-0496">Mitochondrion</keyword>
<keyword id="KW-0999">Mitochondrion inner membrane</keyword>
<keyword id="KW-0679">Respiratory chain</keyword>
<keyword id="KW-0812">Transmembrane</keyword>
<keyword id="KW-1133">Transmembrane helix</keyword>
<keyword id="KW-0813">Transport</keyword>
<keyword id="KW-0830">Ubiquinone</keyword>
<gene>
    <name type="primary">MT-CYB</name>
    <name type="synonym">COB</name>
    <name type="synonym">CYTB</name>
    <name type="synonym">MTCYB</name>
</gene>
<accession>Q597E3</accession>
<dbReference type="EMBL" id="AY380753">
    <property type="protein sequence ID" value="AAR91766.1"/>
    <property type="molecule type" value="Genomic_DNA"/>
</dbReference>
<dbReference type="SMR" id="Q597E3"/>
<dbReference type="GO" id="GO:0005743">
    <property type="term" value="C:mitochondrial inner membrane"/>
    <property type="evidence" value="ECO:0007669"/>
    <property type="project" value="UniProtKB-SubCell"/>
</dbReference>
<dbReference type="GO" id="GO:0045275">
    <property type="term" value="C:respiratory chain complex III"/>
    <property type="evidence" value="ECO:0007669"/>
    <property type="project" value="InterPro"/>
</dbReference>
<dbReference type="GO" id="GO:0046872">
    <property type="term" value="F:metal ion binding"/>
    <property type="evidence" value="ECO:0007669"/>
    <property type="project" value="UniProtKB-KW"/>
</dbReference>
<dbReference type="GO" id="GO:0008121">
    <property type="term" value="F:ubiquinol-cytochrome-c reductase activity"/>
    <property type="evidence" value="ECO:0007669"/>
    <property type="project" value="InterPro"/>
</dbReference>
<dbReference type="GO" id="GO:0006122">
    <property type="term" value="P:mitochondrial electron transport, ubiquinol to cytochrome c"/>
    <property type="evidence" value="ECO:0007669"/>
    <property type="project" value="TreeGrafter"/>
</dbReference>
<dbReference type="CDD" id="cd00290">
    <property type="entry name" value="cytochrome_b_C"/>
    <property type="match status" value="1"/>
</dbReference>
<dbReference type="CDD" id="cd00284">
    <property type="entry name" value="Cytochrome_b_N"/>
    <property type="match status" value="1"/>
</dbReference>
<dbReference type="FunFam" id="1.20.810.10:FF:000002">
    <property type="entry name" value="Cytochrome b"/>
    <property type="match status" value="1"/>
</dbReference>
<dbReference type="Gene3D" id="1.20.810.10">
    <property type="entry name" value="Cytochrome Bc1 Complex, Chain C"/>
    <property type="match status" value="1"/>
</dbReference>
<dbReference type="InterPro" id="IPR005798">
    <property type="entry name" value="Cyt_b/b6_C"/>
</dbReference>
<dbReference type="InterPro" id="IPR036150">
    <property type="entry name" value="Cyt_b/b6_C_sf"/>
</dbReference>
<dbReference type="InterPro" id="IPR005797">
    <property type="entry name" value="Cyt_b/b6_N"/>
</dbReference>
<dbReference type="InterPro" id="IPR027387">
    <property type="entry name" value="Cytb/b6-like_sf"/>
</dbReference>
<dbReference type="InterPro" id="IPR030689">
    <property type="entry name" value="Cytochrome_b"/>
</dbReference>
<dbReference type="InterPro" id="IPR048260">
    <property type="entry name" value="Cytochrome_b_C_euk/bac"/>
</dbReference>
<dbReference type="InterPro" id="IPR048259">
    <property type="entry name" value="Cytochrome_b_N_euk/bac"/>
</dbReference>
<dbReference type="InterPro" id="IPR016174">
    <property type="entry name" value="Di-haem_cyt_TM"/>
</dbReference>
<dbReference type="PANTHER" id="PTHR19271">
    <property type="entry name" value="CYTOCHROME B"/>
    <property type="match status" value="1"/>
</dbReference>
<dbReference type="PANTHER" id="PTHR19271:SF16">
    <property type="entry name" value="CYTOCHROME B"/>
    <property type="match status" value="1"/>
</dbReference>
<dbReference type="Pfam" id="PF00032">
    <property type="entry name" value="Cytochrom_B_C"/>
    <property type="match status" value="1"/>
</dbReference>
<dbReference type="Pfam" id="PF00033">
    <property type="entry name" value="Cytochrome_B"/>
    <property type="match status" value="1"/>
</dbReference>
<dbReference type="PIRSF" id="PIRSF038885">
    <property type="entry name" value="COB"/>
    <property type="match status" value="1"/>
</dbReference>
<dbReference type="SUPFAM" id="SSF81648">
    <property type="entry name" value="a domain/subunit of cytochrome bc1 complex (Ubiquinol-cytochrome c reductase)"/>
    <property type="match status" value="1"/>
</dbReference>
<dbReference type="SUPFAM" id="SSF81342">
    <property type="entry name" value="Transmembrane di-heme cytochromes"/>
    <property type="match status" value="1"/>
</dbReference>
<dbReference type="PROSITE" id="PS51003">
    <property type="entry name" value="CYTB_CTER"/>
    <property type="match status" value="1"/>
</dbReference>
<dbReference type="PROSITE" id="PS51002">
    <property type="entry name" value="CYTB_NTER"/>
    <property type="match status" value="1"/>
</dbReference>
<reference key="1">
    <citation type="submission" date="2003-09" db="EMBL/GenBank/DDBJ databases">
        <title>Molecular evidence for unrecognized biodiversity in the bat genus Micronycteris (Phyllostomidae), with descriptions of two new subgenera.</title>
        <authorList>
            <person name="Porter C.A."/>
            <person name="Hoofer S.R."/>
            <person name="Cline C.A."/>
            <person name="Hoffmann F.G."/>
            <person name="Baker R.J."/>
        </authorList>
    </citation>
    <scope>NUCLEOTIDE SEQUENCE [GENOMIC DNA]</scope>
</reference>
<feature type="chain" id="PRO_0000257923" description="Cytochrome b">
    <location>
        <begin position="1"/>
        <end position="379"/>
    </location>
</feature>
<feature type="transmembrane region" description="Helical" evidence="2">
    <location>
        <begin position="33"/>
        <end position="53"/>
    </location>
</feature>
<feature type="transmembrane region" description="Helical" evidence="2">
    <location>
        <begin position="77"/>
        <end position="98"/>
    </location>
</feature>
<feature type="transmembrane region" description="Helical" evidence="2">
    <location>
        <begin position="113"/>
        <end position="133"/>
    </location>
</feature>
<feature type="transmembrane region" description="Helical" evidence="2">
    <location>
        <begin position="178"/>
        <end position="198"/>
    </location>
</feature>
<feature type="transmembrane region" description="Helical" evidence="2">
    <location>
        <begin position="226"/>
        <end position="246"/>
    </location>
</feature>
<feature type="transmembrane region" description="Helical" evidence="2">
    <location>
        <begin position="288"/>
        <end position="308"/>
    </location>
</feature>
<feature type="transmembrane region" description="Helical" evidence="2">
    <location>
        <begin position="320"/>
        <end position="340"/>
    </location>
</feature>
<feature type="transmembrane region" description="Helical" evidence="2">
    <location>
        <begin position="347"/>
        <end position="367"/>
    </location>
</feature>
<feature type="binding site" description="axial binding residue" evidence="2">
    <location>
        <position position="83"/>
    </location>
    <ligand>
        <name>heme b</name>
        <dbReference type="ChEBI" id="CHEBI:60344"/>
        <label>b562</label>
    </ligand>
    <ligandPart>
        <name>Fe</name>
        <dbReference type="ChEBI" id="CHEBI:18248"/>
    </ligandPart>
</feature>
<feature type="binding site" description="axial binding residue" evidence="2">
    <location>
        <position position="97"/>
    </location>
    <ligand>
        <name>heme b</name>
        <dbReference type="ChEBI" id="CHEBI:60344"/>
        <label>b566</label>
    </ligand>
    <ligandPart>
        <name>Fe</name>
        <dbReference type="ChEBI" id="CHEBI:18248"/>
    </ligandPart>
</feature>
<feature type="binding site" description="axial binding residue" evidence="2">
    <location>
        <position position="182"/>
    </location>
    <ligand>
        <name>heme b</name>
        <dbReference type="ChEBI" id="CHEBI:60344"/>
        <label>b562</label>
    </ligand>
    <ligandPart>
        <name>Fe</name>
        <dbReference type="ChEBI" id="CHEBI:18248"/>
    </ligandPart>
</feature>
<feature type="binding site" description="axial binding residue" evidence="2">
    <location>
        <position position="196"/>
    </location>
    <ligand>
        <name>heme b</name>
        <dbReference type="ChEBI" id="CHEBI:60344"/>
        <label>b566</label>
    </ligand>
    <ligandPart>
        <name>Fe</name>
        <dbReference type="ChEBI" id="CHEBI:18248"/>
    </ligandPart>
</feature>
<feature type="binding site" evidence="2">
    <location>
        <position position="201"/>
    </location>
    <ligand>
        <name>a ubiquinone</name>
        <dbReference type="ChEBI" id="CHEBI:16389"/>
    </ligand>
</feature>